<protein>
    <recommendedName>
        <fullName>Fibronectin-binding protein A</fullName>
    </recommendedName>
</protein>
<organism>
    <name type="scientific">Staphylococcus aureus (strain COL)</name>
    <dbReference type="NCBI Taxonomy" id="93062"/>
    <lineage>
        <taxon>Bacteria</taxon>
        <taxon>Bacillati</taxon>
        <taxon>Bacillota</taxon>
        <taxon>Bacilli</taxon>
        <taxon>Bacillales</taxon>
        <taxon>Staphylococcaceae</taxon>
        <taxon>Staphylococcus</taxon>
    </lineage>
</organism>
<reference key="1">
    <citation type="journal article" date="2005" name="J. Bacteriol.">
        <title>Insights on evolution of virulence and resistance from the complete genome analysis of an early methicillin-resistant Staphylococcus aureus strain and a biofilm-producing methicillin-resistant Staphylococcus epidermidis strain.</title>
        <authorList>
            <person name="Gill S.R."/>
            <person name="Fouts D.E."/>
            <person name="Archer G.L."/>
            <person name="Mongodin E.F."/>
            <person name="DeBoy R.T."/>
            <person name="Ravel J."/>
            <person name="Paulsen I.T."/>
            <person name="Kolonay J.F."/>
            <person name="Brinkac L.M."/>
            <person name="Beanan M.J."/>
            <person name="Dodson R.J."/>
            <person name="Daugherty S.C."/>
            <person name="Madupu R."/>
            <person name="Angiuoli S.V."/>
            <person name="Durkin A.S."/>
            <person name="Haft D.H."/>
            <person name="Vamathevan J.J."/>
            <person name="Khouri H."/>
            <person name="Utterback T.R."/>
            <person name="Lee C."/>
            <person name="Dimitrov G."/>
            <person name="Jiang L."/>
            <person name="Qin H."/>
            <person name="Weidman J."/>
            <person name="Tran K."/>
            <person name="Kang K.H."/>
            <person name="Hance I.R."/>
            <person name="Nelson K.E."/>
            <person name="Fraser C.M."/>
        </authorList>
    </citation>
    <scope>NUCLEOTIDE SEQUENCE [LARGE SCALE GENOMIC DNA]</scope>
    <source>
        <strain>COL</strain>
    </source>
</reference>
<sequence>MKNNLRYGIRKHKLGAASVFLGTMIVVGMGQDKEAAASEQKTTTVEENGNSATDNKTSETQTTATNVNHIEETQSYNATVTEQPSNATQVTTEEAPKAVQAPQTAQPANIETVKEEVVKEEAKPQVKETTQSQDNSGDQRQVDLTPKKATQNQVAETQVEVAQPRTASESKPRVTRSADVAEAKEASNAKVETGTDVTSKVTVEIGSIEGHNNTNKVEPHAGQRAVLKYKLKFENGLHQGDYFDFTLSNNVNTHGVSTARKVPEIKNGSVVMATGEVLEGGKIRYTFTNDIEDKVDVTAELEINLFIDPKTVQTNGNQTITSTLNEEQTSKELDVKYKDGIGNYYANLNGSIETFNKANNRFSHVAFIKPNNGKTTSVTVTGTLMKGSNQNGNQPKVRIFEYLGNNEDIAKSVYANTTDTSKFKEVTSNMSGNLNLQNNGSYSLNIENLDKTYVVHYDGEYLNGTDEVDFRTQMVGHPEQLYKYYYDRGYTLTWDNGLVLYSNKANGNGKNGPIIQNNKFEYKEDTIKETLTGQYDKNLVTTVEEEYDSSTLDIDYHTAIDGGGGYVDGYIETIEETDSSAIDIDYHTAVDSEAGHVGGYTESSEESNPIDFEESTHENSKHHADVVEYEEDTNPGGGQVTTESNLVEFDEESTKGIVTGAVSDHTTVEDTKEYTTESNLIELVDELPEEHGQAQGPVEEITENNHHISHSGLGTENGHGNYDVIEEIEENSHVDIKSELGYEGGQNSGNQSFEEDTEEDKPKYEQGGNIVDIDFDSVPQIHGQNKGNQSFEEDTEKDKPKYEHGGNIIDIDFDSVPHIHGFNKHTEIIEEDTNKDKPSYQFGGHNSVDFEEDTLPKVSGQNEGQQTIEEDTTPPIVPPTPPTPEVPSEPETPTPPTPEVPSEPETPTPPTPEVPSEPETPTPPTPEVPAEPGKPVPPAKEEPKKPSKPVEQGKVVTPVIEINEKVKAVAPTKKPQSKKSELPETGGEESTNKGMLFGGLFSILGLALLRRNKKNHKA</sequence>
<name>FNBA_STAAC</name>
<accession>Q5HD51</accession>
<keyword id="KW-0130">Cell adhesion</keyword>
<keyword id="KW-0134">Cell wall</keyword>
<keyword id="KW-0572">Peptidoglycan-anchor</keyword>
<keyword id="KW-0677">Repeat</keyword>
<keyword id="KW-0964">Secreted</keyword>
<keyword id="KW-0732">Signal</keyword>
<keyword id="KW-0843">Virulence</keyword>
<proteinExistence type="inferred from homology"/>
<gene>
    <name type="primary">fnbA</name>
    <name type="ordered locus">SACOL2511</name>
</gene>
<feature type="signal peptide" evidence="3">
    <location>
        <begin position="1"/>
        <end position="36"/>
    </location>
</feature>
<feature type="chain" id="PRO_0000313878" description="Fibronectin-binding protein A">
    <location>
        <begin position="37"/>
        <end position="985"/>
    </location>
</feature>
<feature type="propeptide" id="PRO_0000313879" description="Removed by sortase" evidence="4">
    <location>
        <begin position="986"/>
        <end position="1018"/>
    </location>
</feature>
<feature type="repeat" description="B-1">
    <location>
        <begin position="545"/>
        <end position="574"/>
    </location>
</feature>
<feature type="repeat" description="B-2">
    <location>
        <begin position="575"/>
        <end position="604"/>
    </location>
</feature>
<feature type="repeat" description="D-1">
    <location>
        <begin position="745"/>
        <end position="782"/>
    </location>
</feature>
<feature type="repeat" description="D-2">
    <location>
        <begin position="783"/>
        <end position="820"/>
    </location>
</feature>
<feature type="repeat" description="D-3">
    <location>
        <begin position="821"/>
        <end position="859"/>
    </location>
</feature>
<feature type="repeat" description="D-4; truncated">
    <location>
        <begin position="860"/>
        <end position="878"/>
    </location>
</feature>
<feature type="repeat" description="WR 1">
    <location>
        <begin position="879"/>
        <end position="892"/>
    </location>
</feature>
<feature type="repeat" description="WR 2">
    <location>
        <begin position="893"/>
        <end position="906"/>
    </location>
</feature>
<feature type="repeat" description="WR 3">
    <location>
        <begin position="907"/>
        <end position="920"/>
    </location>
</feature>
<feature type="repeat" description="WR 4">
    <location>
        <begin position="921"/>
        <end position="934"/>
    </location>
</feature>
<feature type="repeat" description="WR 5">
    <location>
        <begin position="935"/>
        <end position="948"/>
    </location>
</feature>
<feature type="region of interest" description="Ligand-binding A region">
    <location>
        <begin position="37"/>
        <end position="511"/>
    </location>
</feature>
<feature type="region of interest" description="Disordered" evidence="5">
    <location>
        <begin position="38"/>
        <end position="61"/>
    </location>
</feature>
<feature type="region of interest" description="Disordered" evidence="5">
    <location>
        <begin position="78"/>
        <end position="195"/>
    </location>
</feature>
<feature type="region of interest" description="Fibrinogen/elastin/tropoelastin-binding" evidence="1">
    <location>
        <begin position="194"/>
        <end position="511"/>
    </location>
</feature>
<feature type="region of interest" description="Fibronectin-binding" evidence="1">
    <location>
        <begin position="512"/>
        <end position="872"/>
    </location>
</feature>
<feature type="region of interest" description="2 X approximate tandem repeats">
    <location>
        <begin position="545"/>
        <end position="604"/>
    </location>
</feature>
<feature type="region of interest" description="Disordered" evidence="5">
    <location>
        <begin position="595"/>
        <end position="622"/>
    </location>
</feature>
<feature type="region of interest" description="Disordered" evidence="5">
    <location>
        <begin position="740"/>
        <end position="813"/>
    </location>
</feature>
<feature type="region of interest" description="4 X approximate tandem repeats">
    <location>
        <begin position="745"/>
        <end position="878"/>
    </location>
</feature>
<feature type="region of interest" description="Disordered" evidence="5">
    <location>
        <begin position="827"/>
        <end position="997"/>
    </location>
</feature>
<feature type="region of interest" description="5 X tandem repeats, Pro-rich (WR)">
    <location>
        <begin position="879"/>
        <end position="948"/>
    </location>
</feature>
<feature type="short sequence motif" description="YSIRK-G/S signaling motif" evidence="2">
    <location>
        <begin position="7"/>
        <end position="18"/>
    </location>
</feature>
<feature type="short sequence motif" description="LPXTG sorting signal" evidence="4">
    <location>
        <begin position="982"/>
        <end position="986"/>
    </location>
</feature>
<feature type="compositionally biased region" description="Polar residues" evidence="5">
    <location>
        <begin position="39"/>
        <end position="61"/>
    </location>
</feature>
<feature type="compositionally biased region" description="Polar residues" evidence="5">
    <location>
        <begin position="78"/>
        <end position="92"/>
    </location>
</feature>
<feature type="compositionally biased region" description="Basic and acidic residues" evidence="5">
    <location>
        <begin position="112"/>
        <end position="126"/>
    </location>
</feature>
<feature type="compositionally biased region" description="Polar residues" evidence="5">
    <location>
        <begin position="129"/>
        <end position="139"/>
    </location>
</feature>
<feature type="compositionally biased region" description="Basic and acidic residues" evidence="5">
    <location>
        <begin position="827"/>
        <end position="838"/>
    </location>
</feature>
<feature type="compositionally biased region" description="Pro residues" evidence="5">
    <location>
        <begin position="875"/>
        <end position="938"/>
    </location>
</feature>
<feature type="modified residue" description="Pentaglycyl murein peptidoglycan amidated threonine" evidence="4">
    <location>
        <position position="985"/>
    </location>
</feature>
<comment type="function">
    <text evidence="1">Promotes bacterial attachment to multiple substrates, such as fibronectin (Fn), fibrinogen (Fg), elastin peptides and tropoelastin. This confers to S.aureus the ability to invade endothelial cells. Promotes adherence to and aggregation of activated platelets (By similarity).</text>
</comment>
<comment type="subcellular location">
    <subcellularLocation>
        <location evidence="4">Secreted</location>
        <location evidence="4">Cell wall</location>
        <topology evidence="4">Peptidoglycan-anchor</topology>
    </subcellularLocation>
    <text evidence="2">Anchored to the cell wall by sortase A (By similarity).</text>
</comment>
<dbReference type="EMBL" id="CP000046">
    <property type="protein sequence ID" value="AAW37290.1"/>
    <property type="molecule type" value="Genomic_DNA"/>
</dbReference>
<dbReference type="RefSeq" id="WP_000794589.1">
    <property type="nucleotide sequence ID" value="NZ_JBGOFO010000001.1"/>
</dbReference>
<dbReference type="SMR" id="Q5HD51"/>
<dbReference type="KEGG" id="sac:SACOL2511"/>
<dbReference type="HOGENOM" id="CLU_009849_1_0_9"/>
<dbReference type="Proteomes" id="UP000000530">
    <property type="component" value="Chromosome"/>
</dbReference>
<dbReference type="GO" id="GO:0005576">
    <property type="term" value="C:extracellular region"/>
    <property type="evidence" value="ECO:0007669"/>
    <property type="project" value="UniProtKB-KW"/>
</dbReference>
<dbReference type="GO" id="GO:0007155">
    <property type="term" value="P:cell adhesion"/>
    <property type="evidence" value="ECO:0007669"/>
    <property type="project" value="UniProtKB-KW"/>
</dbReference>
<dbReference type="FunFam" id="2.60.40.1280:FF:000004">
    <property type="entry name" value="Fibronectin-binding protein A"/>
    <property type="match status" value="1"/>
</dbReference>
<dbReference type="FunFam" id="2.60.40.1290:FF:000002">
    <property type="entry name" value="Fibronectin-binding protein A"/>
    <property type="match status" value="1"/>
</dbReference>
<dbReference type="Gene3D" id="2.60.40.1280">
    <property type="match status" value="1"/>
</dbReference>
<dbReference type="Gene3D" id="2.60.40.1290">
    <property type="match status" value="1"/>
</dbReference>
<dbReference type="InterPro" id="IPR011266">
    <property type="entry name" value="Adhesin_Fg-bd_dom_2"/>
</dbReference>
<dbReference type="InterPro" id="IPR008966">
    <property type="entry name" value="Adhesion_dom_sf"/>
</dbReference>
<dbReference type="InterPro" id="IPR011252">
    <property type="entry name" value="Fibrogen-bd_dom1"/>
</dbReference>
<dbReference type="InterPro" id="IPR004237">
    <property type="entry name" value="Fibron_repeat-bd"/>
</dbReference>
<dbReference type="InterPro" id="IPR019931">
    <property type="entry name" value="LPXTG_anchor"/>
</dbReference>
<dbReference type="InterPro" id="IPR041171">
    <property type="entry name" value="SDR_Ig"/>
</dbReference>
<dbReference type="InterPro" id="IPR005877">
    <property type="entry name" value="YSIRK_signal_dom"/>
</dbReference>
<dbReference type="NCBIfam" id="TIGR01167">
    <property type="entry name" value="LPXTG_anchor"/>
    <property type="match status" value="1"/>
</dbReference>
<dbReference type="NCBIfam" id="TIGR01168">
    <property type="entry name" value="YSIRK_signal"/>
    <property type="match status" value="1"/>
</dbReference>
<dbReference type="PANTHER" id="PTHR24216">
    <property type="entry name" value="PAXILLIN-RELATED"/>
    <property type="match status" value="1"/>
</dbReference>
<dbReference type="Pfam" id="PF17961">
    <property type="entry name" value="Big_8"/>
    <property type="match status" value="1"/>
</dbReference>
<dbReference type="Pfam" id="PF02986">
    <property type="entry name" value="Fn_bind"/>
    <property type="match status" value="3"/>
</dbReference>
<dbReference type="Pfam" id="PF00746">
    <property type="entry name" value="Gram_pos_anchor"/>
    <property type="match status" value="1"/>
</dbReference>
<dbReference type="Pfam" id="PF10425">
    <property type="entry name" value="SdrG_C_C"/>
    <property type="match status" value="1"/>
</dbReference>
<dbReference type="Pfam" id="PF04650">
    <property type="entry name" value="YSIRK_signal"/>
    <property type="match status" value="1"/>
</dbReference>
<dbReference type="SUPFAM" id="SSF49401">
    <property type="entry name" value="Bacterial adhesins"/>
    <property type="match status" value="2"/>
</dbReference>
<dbReference type="PROSITE" id="PS50847">
    <property type="entry name" value="GRAM_POS_ANCHORING"/>
    <property type="match status" value="1"/>
</dbReference>
<evidence type="ECO:0000250" key="1"/>
<evidence type="ECO:0000250" key="2">
    <source>
        <dbReference type="UniProtKB" id="P14738"/>
    </source>
</evidence>
<evidence type="ECO:0000255" key="3"/>
<evidence type="ECO:0000255" key="4">
    <source>
        <dbReference type="PROSITE-ProRule" id="PRU00477"/>
    </source>
</evidence>
<evidence type="ECO:0000256" key="5">
    <source>
        <dbReference type="SAM" id="MobiDB-lite"/>
    </source>
</evidence>